<proteinExistence type="evidence at protein level"/>
<accession>P32344</accession>
<accession>D6VYK5</accession>
<evidence type="ECO:0000256" key="1">
    <source>
        <dbReference type="SAM" id="MobiDB-lite"/>
    </source>
</evidence>
<evidence type="ECO:0000269" key="2">
    <source>
    </source>
</evidence>
<evidence type="ECO:0000269" key="3">
    <source>
    </source>
</evidence>
<evidence type="ECO:0000269" key="4">
    <source>
    </source>
</evidence>
<evidence type="ECO:0000269" key="5">
    <source>
    </source>
</evidence>
<evidence type="ECO:0000303" key="6">
    <source>
    </source>
</evidence>
<evidence type="ECO:0000305" key="7"/>
<evidence type="ECO:0000305" key="8">
    <source>
    </source>
</evidence>
<evidence type="ECO:0000305" key="9">
    <source>
    </source>
</evidence>
<organism>
    <name type="scientific">Saccharomyces cerevisiae (strain ATCC 204508 / S288c)</name>
    <name type="common">Baker's yeast</name>
    <dbReference type="NCBI Taxonomy" id="559292"/>
    <lineage>
        <taxon>Eukaryota</taxon>
        <taxon>Fungi</taxon>
        <taxon>Dikarya</taxon>
        <taxon>Ascomycota</taxon>
        <taxon>Saccharomycotina</taxon>
        <taxon>Saccharomycetes</taxon>
        <taxon>Saccharomycetales</taxon>
        <taxon>Saccharomycetaceae</taxon>
        <taxon>Saccharomyces</taxon>
    </lineage>
</organism>
<name>COX24_YEAST</name>
<feature type="chain" id="PRO_0000097136" description="Small ribosomal subunit protein mS38">
    <location>
        <begin position="1"/>
        <end position="111"/>
    </location>
</feature>
<feature type="region of interest" description="Disordered" evidence="1">
    <location>
        <begin position="82"/>
        <end position="111"/>
    </location>
</feature>
<feature type="compositionally biased region" description="Basic residues" evidence="1">
    <location>
        <begin position="82"/>
        <end position="99"/>
    </location>
</feature>
<feature type="compositionally biased region" description="Basic and acidic residues" evidence="1">
    <location>
        <begin position="100"/>
        <end position="111"/>
    </location>
</feature>
<dbReference type="EMBL" id="J01487">
    <property type="protein sequence ID" value="AAA66925.1"/>
    <property type="molecule type" value="Genomic_DNA"/>
</dbReference>
<dbReference type="EMBL" id="S43721">
    <property type="protein sequence ID" value="AAB23217.1"/>
    <property type="molecule type" value="Genomic_DNA"/>
</dbReference>
<dbReference type="EMBL" id="AY693193">
    <property type="protein sequence ID" value="AAT93212.1"/>
    <property type="molecule type" value="Genomic_DNA"/>
</dbReference>
<dbReference type="EMBL" id="U14913">
    <property type="protein sequence ID" value="AAB67429.1"/>
    <property type="molecule type" value="Genomic_DNA"/>
</dbReference>
<dbReference type="EMBL" id="BK006945">
    <property type="protein sequence ID" value="DAA09521.1"/>
    <property type="molecule type" value="Genomic_DNA"/>
</dbReference>
<dbReference type="PIR" id="S25343">
    <property type="entry name" value="S25343"/>
</dbReference>
<dbReference type="RefSeq" id="NP_013305.1">
    <property type="nucleotide sequence ID" value="NM_001182091.1"/>
</dbReference>
<dbReference type="PDB" id="5MRC">
    <property type="method" value="EM"/>
    <property type="resolution" value="3.25 A"/>
    <property type="chains" value="11=78-111"/>
</dbReference>
<dbReference type="PDB" id="5MRE">
    <property type="method" value="EM"/>
    <property type="resolution" value="3.75 A"/>
    <property type="chains" value="11=78-111"/>
</dbReference>
<dbReference type="PDB" id="5MRF">
    <property type="method" value="EM"/>
    <property type="resolution" value="4.97 A"/>
    <property type="chains" value="11=78-111"/>
</dbReference>
<dbReference type="PDB" id="8OM2">
    <property type="method" value="EM"/>
    <property type="resolution" value="2.57 A"/>
    <property type="chains" value="1=1-111"/>
</dbReference>
<dbReference type="PDB" id="8OM3">
    <property type="method" value="EM"/>
    <property type="resolution" value="2.87 A"/>
    <property type="chains" value="1=1-111"/>
</dbReference>
<dbReference type="PDB" id="8OM4">
    <property type="method" value="EM"/>
    <property type="resolution" value="2.32 A"/>
    <property type="chains" value="1=1-111"/>
</dbReference>
<dbReference type="PDBsum" id="5MRC"/>
<dbReference type="PDBsum" id="5MRE"/>
<dbReference type="PDBsum" id="5MRF"/>
<dbReference type="PDBsum" id="8OM2"/>
<dbReference type="PDBsum" id="8OM3"/>
<dbReference type="PDBsum" id="8OM4"/>
<dbReference type="EMDB" id="EMD-16966"/>
<dbReference type="EMDB" id="EMD-16967"/>
<dbReference type="EMDB" id="EMD-16968"/>
<dbReference type="EMDB" id="EMD-3551"/>
<dbReference type="EMDB" id="EMD-3552"/>
<dbReference type="EMDB" id="EMD-3553"/>
<dbReference type="SMR" id="P32344"/>
<dbReference type="BioGRID" id="31472">
    <property type="interactions" value="140"/>
</dbReference>
<dbReference type="ComplexPortal" id="CPX-1603">
    <property type="entry name" value="37S mitochondrial small ribosomal subunit"/>
</dbReference>
<dbReference type="DIP" id="DIP-7605N"/>
<dbReference type="FunCoup" id="P32344">
    <property type="interactions" value="120"/>
</dbReference>
<dbReference type="IntAct" id="P32344">
    <property type="interactions" value="73"/>
</dbReference>
<dbReference type="STRING" id="4932.YLR204W"/>
<dbReference type="PaxDb" id="4932-YLR204W"/>
<dbReference type="EnsemblFungi" id="YLR204W_mRNA">
    <property type="protein sequence ID" value="YLR204W"/>
    <property type="gene ID" value="YLR204W"/>
</dbReference>
<dbReference type="GeneID" id="850901"/>
<dbReference type="KEGG" id="sce:YLR204W"/>
<dbReference type="AGR" id="SGD:S000004194"/>
<dbReference type="SGD" id="S000004194">
    <property type="gene designation" value="QRI5"/>
</dbReference>
<dbReference type="VEuPathDB" id="FungiDB:YLR204W"/>
<dbReference type="HOGENOM" id="CLU_145590_0_0_1"/>
<dbReference type="InParanoid" id="P32344"/>
<dbReference type="OMA" id="MQLDSVM"/>
<dbReference type="OrthoDB" id="4066132at2759"/>
<dbReference type="BioCyc" id="YEAST:G3O-32323-MONOMER"/>
<dbReference type="BioGRID-ORCS" id="850901">
    <property type="hits" value="9 hits in 10 CRISPR screens"/>
</dbReference>
<dbReference type="PRO" id="PR:P32344"/>
<dbReference type="Proteomes" id="UP000002311">
    <property type="component" value="Chromosome XII"/>
</dbReference>
<dbReference type="RNAct" id="P32344">
    <property type="molecule type" value="protein"/>
</dbReference>
<dbReference type="GO" id="GO:0005743">
    <property type="term" value="C:mitochondrial inner membrane"/>
    <property type="evidence" value="ECO:0000314"/>
    <property type="project" value="SGD"/>
</dbReference>
<dbReference type="GO" id="GO:0005763">
    <property type="term" value="C:mitochondrial small ribosomal subunit"/>
    <property type="evidence" value="ECO:0000314"/>
    <property type="project" value="SGD"/>
</dbReference>
<dbReference type="GO" id="GO:0005739">
    <property type="term" value="C:mitochondrion"/>
    <property type="evidence" value="ECO:0007005"/>
    <property type="project" value="SGD"/>
</dbReference>
<dbReference type="GO" id="GO:0003735">
    <property type="term" value="F:structural constituent of ribosome"/>
    <property type="evidence" value="ECO:0000314"/>
    <property type="project" value="SGD"/>
</dbReference>
<dbReference type="GO" id="GO:0061668">
    <property type="term" value="P:mitochondrial ribosome assembly"/>
    <property type="evidence" value="ECO:0000315"/>
    <property type="project" value="SGD"/>
</dbReference>
<dbReference type="GO" id="GO:0032543">
    <property type="term" value="P:mitochondrial translation"/>
    <property type="evidence" value="ECO:0000303"/>
    <property type="project" value="ComplexPortal"/>
</dbReference>
<dbReference type="GO" id="GO:0070124">
    <property type="term" value="P:mitochondrial translational initiation"/>
    <property type="evidence" value="ECO:0000315"/>
    <property type="project" value="SGD"/>
</dbReference>
<dbReference type="GO" id="GO:0006397">
    <property type="term" value="P:mRNA processing"/>
    <property type="evidence" value="ECO:0000315"/>
    <property type="project" value="SGD"/>
</dbReference>
<dbReference type="InterPro" id="IPR013177">
    <property type="entry name" value="Ribosomal_mS38_C"/>
</dbReference>
<dbReference type="PANTHER" id="PTHR32035">
    <property type="entry name" value="AURORA KINASE A-INTERACTING PROTEIN"/>
    <property type="match status" value="1"/>
</dbReference>
<dbReference type="PANTHER" id="PTHR32035:SF3">
    <property type="entry name" value="SMALL RIBOSOMAL SUBUNIT PROTEIN MS38"/>
    <property type="match status" value="1"/>
</dbReference>
<dbReference type="Pfam" id="PF08213">
    <property type="entry name" value="COX24_C"/>
    <property type="match status" value="1"/>
</dbReference>
<dbReference type="SMART" id="SM01155">
    <property type="entry name" value="DUF1713"/>
    <property type="match status" value="1"/>
</dbReference>
<comment type="function">
    <text evidence="3 8 9">Component of the mitochondrial ribosome (mitoribosome), a dedicated translation machinery responsible for the synthesis of mitochondrial genome-encoded proteins, including at least some of the essential transmembrane subunits of the mitochondrial respiratory chain. The mitoribosomes are attached to the mitochondrial inner membrane and translation products are cotranslationally integrated into the membrane (PubMed:25609543, PubMed:28154081). mS38 is also involved in the splicing of the COX1 mRNA (PubMed:16339141).</text>
</comment>
<comment type="subunit">
    <text evidence="5">Component of the mitochondrial small ribosomal subunit (mt-SSU). Mature yeast 74S mitochondrial ribosomes consist of a small (37S) and a large (54S) subunit. The 37S small subunit contains a 15S ribosomal RNA (15S mt-rRNA) and 34 different proteins. The 54S large subunit contains a 21S rRNA (21S mt-rRNA) and 46 different proteins.</text>
</comment>
<comment type="subcellular location">
    <subcellularLocation>
        <location evidence="2">Mitochondrion</location>
    </subcellularLocation>
    <subcellularLocation>
        <location evidence="3">Mitochondrion inner membrane</location>
        <topology evidence="3">Peripheral membrane protein</topology>
        <orientation evidence="3">Matrix side</orientation>
    </subcellularLocation>
    <text evidence="4">Mitoribosomes are tethered to the mitochondrial inner membrane and spatially aligned with the membrane insertion machinery through two distinct membrane contact sites, formed by the 21S rRNA expansion segment 96-ES1 and the inner membrane protein MBA1.</text>
</comment>
<comment type="similarity">
    <text evidence="7">Belongs to the mitochondrion-specific ribosomal protein mS38 family.</text>
</comment>
<protein>
    <recommendedName>
        <fullName evidence="6">Small ribosomal subunit protein mS38</fullName>
    </recommendedName>
    <alternativeName>
        <fullName>Mitochondrial mRNA-processing protein COX24</fullName>
    </alternativeName>
</protein>
<gene>
    <name type="primary">QRI5</name>
    <name type="synonym">COX24</name>
    <name type="ordered locus">YLR204W</name>
</gene>
<keyword id="KW-0002">3D-structure</keyword>
<keyword id="KW-0472">Membrane</keyword>
<keyword id="KW-0496">Mitochondrion</keyword>
<keyword id="KW-0999">Mitochondrion inner membrane</keyword>
<keyword id="KW-0507">mRNA processing</keyword>
<keyword id="KW-1185">Reference proteome</keyword>
<keyword id="KW-0687">Ribonucleoprotein</keyword>
<keyword id="KW-0689">Ribosomal protein</keyword>
<reference key="1">
    <citation type="journal article" date="1992" name="Yeast">
        <title>Analysis of the MSS51 region on chromosome XII of Saccharomyces cerevisiae.</title>
        <authorList>
            <person name="Simon M."/>
            <person name="della Seta F."/>
            <person name="Sor F."/>
            <person name="Faye G."/>
        </authorList>
    </citation>
    <scope>NUCLEOTIDE SEQUENCE [GENOMIC DNA]</scope>
</reference>
<reference key="2">
    <citation type="journal article" date="1997" name="Nature">
        <title>The nucleotide sequence of Saccharomyces cerevisiae chromosome XII.</title>
        <authorList>
            <person name="Johnston M."/>
            <person name="Hillier L.W."/>
            <person name="Riles L."/>
            <person name="Albermann K."/>
            <person name="Andre B."/>
            <person name="Ansorge W."/>
            <person name="Benes V."/>
            <person name="Brueckner M."/>
            <person name="Delius H."/>
            <person name="Dubois E."/>
            <person name="Duesterhoeft A."/>
            <person name="Entian K.-D."/>
            <person name="Floeth M."/>
            <person name="Goffeau A."/>
            <person name="Hebling U."/>
            <person name="Heumann K."/>
            <person name="Heuss-Neitzel D."/>
            <person name="Hilbert H."/>
            <person name="Hilger F."/>
            <person name="Kleine K."/>
            <person name="Koetter P."/>
            <person name="Louis E.J."/>
            <person name="Messenguy F."/>
            <person name="Mewes H.-W."/>
            <person name="Miosga T."/>
            <person name="Moestl D."/>
            <person name="Mueller-Auer S."/>
            <person name="Nentwich U."/>
            <person name="Obermaier B."/>
            <person name="Piravandi E."/>
            <person name="Pohl T.M."/>
            <person name="Portetelle D."/>
            <person name="Purnelle B."/>
            <person name="Rechmann S."/>
            <person name="Rieger M."/>
            <person name="Rinke M."/>
            <person name="Rose M."/>
            <person name="Scharfe M."/>
            <person name="Scherens B."/>
            <person name="Scholler P."/>
            <person name="Schwager C."/>
            <person name="Schwarz S."/>
            <person name="Underwood A.P."/>
            <person name="Urrestarazu L.A."/>
            <person name="Vandenbol M."/>
            <person name="Verhasselt P."/>
            <person name="Vierendeels F."/>
            <person name="Voet M."/>
            <person name="Volckaert G."/>
            <person name="Voss H."/>
            <person name="Wambutt R."/>
            <person name="Wedler E."/>
            <person name="Wedler H."/>
            <person name="Zimmermann F.K."/>
            <person name="Zollner A."/>
            <person name="Hani J."/>
            <person name="Hoheisel J.D."/>
        </authorList>
    </citation>
    <scope>NUCLEOTIDE SEQUENCE [LARGE SCALE GENOMIC DNA]</scope>
    <source>
        <strain>ATCC 204508 / S288c</strain>
    </source>
</reference>
<reference key="3">
    <citation type="journal article" date="2014" name="G3 (Bethesda)">
        <title>The reference genome sequence of Saccharomyces cerevisiae: Then and now.</title>
        <authorList>
            <person name="Engel S.R."/>
            <person name="Dietrich F.S."/>
            <person name="Fisk D.G."/>
            <person name="Binkley G."/>
            <person name="Balakrishnan R."/>
            <person name="Costanzo M.C."/>
            <person name="Dwight S.S."/>
            <person name="Hitz B.C."/>
            <person name="Karra K."/>
            <person name="Nash R.S."/>
            <person name="Weng S."/>
            <person name="Wong E.D."/>
            <person name="Lloyd P."/>
            <person name="Skrzypek M.S."/>
            <person name="Miyasato S.R."/>
            <person name="Simison M."/>
            <person name="Cherry J.M."/>
        </authorList>
    </citation>
    <scope>GENOME REANNOTATION</scope>
    <source>
        <strain>ATCC 204508 / S288c</strain>
    </source>
</reference>
<reference key="4">
    <citation type="journal article" date="2007" name="Genome Res.">
        <title>Approaching a complete repository of sequence-verified protein-encoding clones for Saccharomyces cerevisiae.</title>
        <authorList>
            <person name="Hu Y."/>
            <person name="Rolfs A."/>
            <person name="Bhullar B."/>
            <person name="Murthy T.V.S."/>
            <person name="Zhu C."/>
            <person name="Berger M.F."/>
            <person name="Camargo A.A."/>
            <person name="Kelley F."/>
            <person name="McCarron S."/>
            <person name="Jepson D."/>
            <person name="Richardson A."/>
            <person name="Raphael J."/>
            <person name="Moreira D."/>
            <person name="Taycher E."/>
            <person name="Zuo D."/>
            <person name="Mohr S."/>
            <person name="Kane M.F."/>
            <person name="Williamson J."/>
            <person name="Simpson A.J.G."/>
            <person name="Bulyk M.L."/>
            <person name="Harlow E."/>
            <person name="Marsischky G."/>
            <person name="Kolodner R.D."/>
            <person name="LaBaer J."/>
        </authorList>
    </citation>
    <scope>NUCLEOTIDE SEQUENCE [GENOMIC DNA]</scope>
    <source>
        <strain>ATCC 204508 / S288c</strain>
    </source>
</reference>
<reference key="5">
    <citation type="journal article" date="1983" name="Cell">
        <title>Analysis of a yeast nuclear gene involved in the maturation of mitochondrial pre-messenger RNA of the cytochrome oxidase subunit I.</title>
        <authorList>
            <person name="Faye G."/>
            <person name="Simon M."/>
        </authorList>
    </citation>
    <scope>NUCLEOTIDE SEQUENCE [GENOMIC DNA] OF 1-60</scope>
</reference>
<reference key="6">
    <citation type="journal article" date="2003" name="Nature">
        <title>Global analysis of protein localization in budding yeast.</title>
        <authorList>
            <person name="Huh W.-K."/>
            <person name="Falvo J.V."/>
            <person name="Gerke L.C."/>
            <person name="Carroll A.S."/>
            <person name="Howson R.W."/>
            <person name="Weissman J.S."/>
            <person name="O'Shea E.K."/>
        </authorList>
    </citation>
    <scope>SUBCELLULAR LOCATION [LARGE SCALE ANALYSIS]</scope>
</reference>
<reference key="7">
    <citation type="journal article" date="2006" name="J. Biol. Chem.">
        <title>COX24 codes for a mitochondrial protein required for processing of the COX1 transcript.</title>
        <authorList>
            <person name="Barros M.H."/>
            <person name="Myers A.M."/>
            <person name="Van Driesche S."/>
            <person name="Tzagoloff A."/>
        </authorList>
    </citation>
    <scope>FUNCTION</scope>
    <scope>SUBCELLULAR LOCATION</scope>
</reference>
<reference key="8">
    <citation type="journal article" date="2015" name="Nat. Commun.">
        <title>Organization of the mitochondrial translation machinery studied in situ by cryoelectron tomography.</title>
        <authorList>
            <person name="Pfeffer S."/>
            <person name="Woellhaf M.W."/>
            <person name="Herrmann J.M."/>
            <person name="Forster F."/>
        </authorList>
    </citation>
    <scope>SUBCELLULAR LOCATION</scope>
</reference>
<reference key="9">
    <citation type="journal article" date="2017" name="Science">
        <title>The structure of the yeast mitochondrial ribosome.</title>
        <authorList>
            <person name="Desai N."/>
            <person name="Brown A."/>
            <person name="Amunts A."/>
            <person name="Ramakrishnan V."/>
        </authorList>
    </citation>
    <scope>STRUCTURE BY ELECTRON MICROSCOPY (3.25 ANGSTROMS)</scope>
    <scope>SUBUNIT</scope>
</reference>
<sequence>MLGRALRPGWLGITRTVVKKPSCGSYFNRTFQTAINTTMPPMQEGMLSTMMMMTATATRITGTVSEPLNGSNIVMQLDSVMRKRKKKMKKHKLRKRRKREKAERRKLSQGR</sequence>